<proteinExistence type="inferred from homology"/>
<protein>
    <recommendedName>
        <fullName evidence="1">Glycine--tRNA ligase beta subunit</fullName>
        <ecNumber evidence="1">6.1.1.14</ecNumber>
    </recommendedName>
    <alternativeName>
        <fullName evidence="1">Glycyl-tRNA synthetase beta subunit</fullName>
        <shortName evidence="1">GlyRS</shortName>
    </alternativeName>
</protein>
<accession>A7MKS3</accession>
<organism>
    <name type="scientific">Cronobacter sakazakii (strain ATCC BAA-894)</name>
    <name type="common">Enterobacter sakazakii</name>
    <dbReference type="NCBI Taxonomy" id="290339"/>
    <lineage>
        <taxon>Bacteria</taxon>
        <taxon>Pseudomonadati</taxon>
        <taxon>Pseudomonadota</taxon>
        <taxon>Gammaproteobacteria</taxon>
        <taxon>Enterobacterales</taxon>
        <taxon>Enterobacteriaceae</taxon>
        <taxon>Cronobacter</taxon>
    </lineage>
</organism>
<keyword id="KW-0030">Aminoacyl-tRNA synthetase</keyword>
<keyword id="KW-0067">ATP-binding</keyword>
<keyword id="KW-0963">Cytoplasm</keyword>
<keyword id="KW-0436">Ligase</keyword>
<keyword id="KW-0547">Nucleotide-binding</keyword>
<keyword id="KW-0648">Protein biosynthesis</keyword>
<keyword id="KW-1185">Reference proteome</keyword>
<feature type="chain" id="PRO_1000006359" description="Glycine--tRNA ligase beta subunit">
    <location>
        <begin position="1"/>
        <end position="689"/>
    </location>
</feature>
<comment type="catalytic activity">
    <reaction evidence="1">
        <text>tRNA(Gly) + glycine + ATP = glycyl-tRNA(Gly) + AMP + diphosphate</text>
        <dbReference type="Rhea" id="RHEA:16013"/>
        <dbReference type="Rhea" id="RHEA-COMP:9664"/>
        <dbReference type="Rhea" id="RHEA-COMP:9683"/>
        <dbReference type="ChEBI" id="CHEBI:30616"/>
        <dbReference type="ChEBI" id="CHEBI:33019"/>
        <dbReference type="ChEBI" id="CHEBI:57305"/>
        <dbReference type="ChEBI" id="CHEBI:78442"/>
        <dbReference type="ChEBI" id="CHEBI:78522"/>
        <dbReference type="ChEBI" id="CHEBI:456215"/>
        <dbReference type="EC" id="6.1.1.14"/>
    </reaction>
</comment>
<comment type="subunit">
    <text evidence="1">Tetramer of two alpha and two beta subunits.</text>
</comment>
<comment type="subcellular location">
    <subcellularLocation>
        <location evidence="1">Cytoplasm</location>
    </subcellularLocation>
</comment>
<comment type="similarity">
    <text evidence="1">Belongs to the class-II aminoacyl-tRNA synthetase family.</text>
</comment>
<reference key="1">
    <citation type="journal article" date="2010" name="PLoS ONE">
        <title>Genome sequence of Cronobacter sakazakii BAA-894 and comparative genomic hybridization analysis with other Cronobacter species.</title>
        <authorList>
            <person name="Kucerova E."/>
            <person name="Clifton S.W."/>
            <person name="Xia X.Q."/>
            <person name="Long F."/>
            <person name="Porwollik S."/>
            <person name="Fulton L."/>
            <person name="Fronick C."/>
            <person name="Minx P."/>
            <person name="Kyung K."/>
            <person name="Warren W."/>
            <person name="Fulton R."/>
            <person name="Feng D."/>
            <person name="Wollam A."/>
            <person name="Shah N."/>
            <person name="Bhonagiri V."/>
            <person name="Nash W.E."/>
            <person name="Hallsworth-Pepin K."/>
            <person name="Wilson R.K."/>
            <person name="McClelland M."/>
            <person name="Forsythe S.J."/>
        </authorList>
    </citation>
    <scope>NUCLEOTIDE SEQUENCE [LARGE SCALE GENOMIC DNA]</scope>
    <source>
        <strain>ATCC BAA-894</strain>
    </source>
</reference>
<sequence>MSEKTFLVEIGTEELPPKALRSLAESFAANFTAELDAAGLAHGVVSWFAAPRRLALKVANLAASQPDREVEKRGPAVSAAFDAEGNPSKAAEGWARGCGITVDQAERLVTDKGEWLMYRAHVKGESAQALLPNMVSTALSKLPIPKLMRWGASDVQFVRPVHTVTLLLDDEVLPATILGIQSDRVIRGHRFMGEPEFTIDHADQYPQILLERGKVIADYNARKAKIQQDAEAAAAKIGGNADLSDSLLEEVTSLVEWPVVLTAKFEEKFLAVPAEALVYTMKGDQKYFPVYGTDGKLLPNFIFVANIESKDPRQIISGNEKVVRPRLADAEFFFNTDRKKRLEDHLPRLETVLFQQQLGTLRDKTDRIQALSGWIASQIGADVNHATRAGLLSKCDLMTNMVFEFTDTQGVMGMHYARHDGESEDVAVALNEQYMPRFAGDALPSSLVACAVAIADKMDTLAGIFGIGQHPKGDKDPFALRRAALGVLRIIVEKNLPLDLQTLTEEAVRLYGSKLTNAKVVDDVVDFMLGRFRAWYQDEGYSVDTIQAVLANRPTRPADFDARMKAVSHFRTLDEAVALAAANKRVSNILAKATEPLNDEVHASVLKEDPEIRLALQVAVMRDKLQPLFAEGRYQEALVELAQLREPVDEFFEKVMVNADDAQVRINRLTLLSKLRALFLQVADISLLQ</sequence>
<dbReference type="EC" id="6.1.1.14" evidence="1"/>
<dbReference type="EMBL" id="CP000783">
    <property type="protein sequence ID" value="ABU79350.1"/>
    <property type="molecule type" value="Genomic_DNA"/>
</dbReference>
<dbReference type="RefSeq" id="WP_012126294.1">
    <property type="nucleotide sequence ID" value="NC_009778.1"/>
</dbReference>
<dbReference type="SMR" id="A7MKS3"/>
<dbReference type="KEGG" id="esa:ESA_04169"/>
<dbReference type="PATRIC" id="fig|290339.8.peg.3708"/>
<dbReference type="HOGENOM" id="CLU_007220_2_2_6"/>
<dbReference type="Proteomes" id="UP000000260">
    <property type="component" value="Chromosome"/>
</dbReference>
<dbReference type="GO" id="GO:0005829">
    <property type="term" value="C:cytosol"/>
    <property type="evidence" value="ECO:0007669"/>
    <property type="project" value="TreeGrafter"/>
</dbReference>
<dbReference type="GO" id="GO:0004814">
    <property type="term" value="F:arginine-tRNA ligase activity"/>
    <property type="evidence" value="ECO:0007669"/>
    <property type="project" value="InterPro"/>
</dbReference>
<dbReference type="GO" id="GO:0005524">
    <property type="term" value="F:ATP binding"/>
    <property type="evidence" value="ECO:0007669"/>
    <property type="project" value="UniProtKB-UniRule"/>
</dbReference>
<dbReference type="GO" id="GO:0004820">
    <property type="term" value="F:glycine-tRNA ligase activity"/>
    <property type="evidence" value="ECO:0007669"/>
    <property type="project" value="UniProtKB-UniRule"/>
</dbReference>
<dbReference type="GO" id="GO:0006420">
    <property type="term" value="P:arginyl-tRNA aminoacylation"/>
    <property type="evidence" value="ECO:0007669"/>
    <property type="project" value="InterPro"/>
</dbReference>
<dbReference type="GO" id="GO:0006426">
    <property type="term" value="P:glycyl-tRNA aminoacylation"/>
    <property type="evidence" value="ECO:0007669"/>
    <property type="project" value="UniProtKB-UniRule"/>
</dbReference>
<dbReference type="HAMAP" id="MF_00255">
    <property type="entry name" value="Gly_tRNA_synth_beta"/>
    <property type="match status" value="1"/>
</dbReference>
<dbReference type="InterPro" id="IPR008909">
    <property type="entry name" value="DALR_anticod-bd"/>
</dbReference>
<dbReference type="InterPro" id="IPR015944">
    <property type="entry name" value="Gly-tRNA-synth_bsu"/>
</dbReference>
<dbReference type="InterPro" id="IPR006194">
    <property type="entry name" value="Gly-tRNA-synth_heterodimer"/>
</dbReference>
<dbReference type="NCBIfam" id="TIGR00211">
    <property type="entry name" value="glyS"/>
    <property type="match status" value="1"/>
</dbReference>
<dbReference type="PANTHER" id="PTHR30075:SF2">
    <property type="entry name" value="GLYCINE--TRNA LIGASE, CHLOROPLASTIC_MITOCHONDRIAL 2"/>
    <property type="match status" value="1"/>
</dbReference>
<dbReference type="PANTHER" id="PTHR30075">
    <property type="entry name" value="GLYCYL-TRNA SYNTHETASE"/>
    <property type="match status" value="1"/>
</dbReference>
<dbReference type="Pfam" id="PF05746">
    <property type="entry name" value="DALR_1"/>
    <property type="match status" value="1"/>
</dbReference>
<dbReference type="Pfam" id="PF02092">
    <property type="entry name" value="tRNA_synt_2f"/>
    <property type="match status" value="1"/>
</dbReference>
<dbReference type="PRINTS" id="PR01045">
    <property type="entry name" value="TRNASYNTHGB"/>
</dbReference>
<dbReference type="SUPFAM" id="SSF109604">
    <property type="entry name" value="HD-domain/PDEase-like"/>
    <property type="match status" value="1"/>
</dbReference>
<dbReference type="PROSITE" id="PS50861">
    <property type="entry name" value="AA_TRNA_LIGASE_II_GLYAB"/>
    <property type="match status" value="1"/>
</dbReference>
<name>SYGB_CROS8</name>
<gene>
    <name evidence="1" type="primary">glyS</name>
    <name type="ordered locus">ESA_04169</name>
</gene>
<evidence type="ECO:0000255" key="1">
    <source>
        <dbReference type="HAMAP-Rule" id="MF_00255"/>
    </source>
</evidence>